<name>PUR5_ECO57</name>
<accession>Q8XAC5</accession>
<feature type="initiator methionine" description="Removed" evidence="1">
    <location>
        <position position="1"/>
    </location>
</feature>
<feature type="chain" id="PRO_0000148209" description="Phosphoribosylformylglycinamidine cyclo-ligase">
    <location>
        <begin position="2"/>
        <end position="345"/>
    </location>
</feature>
<gene>
    <name evidence="2" type="primary">purM</name>
    <name type="ordered locus">Z3762</name>
    <name type="ordered locus">ECs3361</name>
</gene>
<evidence type="ECO:0000250" key="1"/>
<evidence type="ECO:0000255" key="2">
    <source>
        <dbReference type="HAMAP-Rule" id="MF_00741"/>
    </source>
</evidence>
<reference key="1">
    <citation type="journal article" date="2001" name="Nature">
        <title>Genome sequence of enterohaemorrhagic Escherichia coli O157:H7.</title>
        <authorList>
            <person name="Perna N.T."/>
            <person name="Plunkett G. III"/>
            <person name="Burland V."/>
            <person name="Mau B."/>
            <person name="Glasner J.D."/>
            <person name="Rose D.J."/>
            <person name="Mayhew G.F."/>
            <person name="Evans P.S."/>
            <person name="Gregor J."/>
            <person name="Kirkpatrick H.A."/>
            <person name="Posfai G."/>
            <person name="Hackett J."/>
            <person name="Klink S."/>
            <person name="Boutin A."/>
            <person name="Shao Y."/>
            <person name="Miller L."/>
            <person name="Grotbeck E.J."/>
            <person name="Davis N.W."/>
            <person name="Lim A."/>
            <person name="Dimalanta E.T."/>
            <person name="Potamousis K."/>
            <person name="Apodaca J."/>
            <person name="Anantharaman T.S."/>
            <person name="Lin J."/>
            <person name="Yen G."/>
            <person name="Schwartz D.C."/>
            <person name="Welch R.A."/>
            <person name="Blattner F.R."/>
        </authorList>
    </citation>
    <scope>NUCLEOTIDE SEQUENCE [LARGE SCALE GENOMIC DNA]</scope>
    <source>
        <strain>O157:H7 / EDL933 / ATCC 700927 / EHEC</strain>
    </source>
</reference>
<reference key="2">
    <citation type="journal article" date="2001" name="DNA Res.">
        <title>Complete genome sequence of enterohemorrhagic Escherichia coli O157:H7 and genomic comparison with a laboratory strain K-12.</title>
        <authorList>
            <person name="Hayashi T."/>
            <person name="Makino K."/>
            <person name="Ohnishi M."/>
            <person name="Kurokawa K."/>
            <person name="Ishii K."/>
            <person name="Yokoyama K."/>
            <person name="Han C.-G."/>
            <person name="Ohtsubo E."/>
            <person name="Nakayama K."/>
            <person name="Murata T."/>
            <person name="Tanaka M."/>
            <person name="Tobe T."/>
            <person name="Iida T."/>
            <person name="Takami H."/>
            <person name="Honda T."/>
            <person name="Sasakawa C."/>
            <person name="Ogasawara N."/>
            <person name="Yasunaga T."/>
            <person name="Kuhara S."/>
            <person name="Shiba T."/>
            <person name="Hattori M."/>
            <person name="Shinagawa H."/>
        </authorList>
    </citation>
    <scope>NUCLEOTIDE SEQUENCE [LARGE SCALE GENOMIC DNA]</scope>
    <source>
        <strain>O157:H7 / Sakai / RIMD 0509952 / EHEC</strain>
    </source>
</reference>
<comment type="catalytic activity">
    <reaction evidence="2">
        <text>2-formamido-N(1)-(5-O-phospho-beta-D-ribosyl)acetamidine + ATP = 5-amino-1-(5-phospho-beta-D-ribosyl)imidazole + ADP + phosphate + H(+)</text>
        <dbReference type="Rhea" id="RHEA:23032"/>
        <dbReference type="ChEBI" id="CHEBI:15378"/>
        <dbReference type="ChEBI" id="CHEBI:30616"/>
        <dbReference type="ChEBI" id="CHEBI:43474"/>
        <dbReference type="ChEBI" id="CHEBI:137981"/>
        <dbReference type="ChEBI" id="CHEBI:147287"/>
        <dbReference type="ChEBI" id="CHEBI:456216"/>
        <dbReference type="EC" id="6.3.3.1"/>
    </reaction>
</comment>
<comment type="pathway">
    <text evidence="2">Purine metabolism; IMP biosynthesis via de novo pathway; 5-amino-1-(5-phospho-D-ribosyl)imidazole from N(2)-formyl-N(1)-(5-phospho-D-ribosyl)glycinamide: step 2/2.</text>
</comment>
<comment type="subunit">
    <text evidence="1">Homodimer.</text>
</comment>
<comment type="subcellular location">
    <subcellularLocation>
        <location evidence="2">Cytoplasm</location>
    </subcellularLocation>
</comment>
<comment type="similarity">
    <text evidence="2">Belongs to the AIR synthase family.</text>
</comment>
<dbReference type="EC" id="6.3.3.1" evidence="2"/>
<dbReference type="EMBL" id="AE005174">
    <property type="protein sequence ID" value="AAG57609.1"/>
    <property type="molecule type" value="Genomic_DNA"/>
</dbReference>
<dbReference type="EMBL" id="BA000007">
    <property type="protein sequence ID" value="BAB36784.1"/>
    <property type="molecule type" value="Genomic_DNA"/>
</dbReference>
<dbReference type="PIR" id="A91049">
    <property type="entry name" value="A91049"/>
</dbReference>
<dbReference type="PIR" id="E85893">
    <property type="entry name" value="E85893"/>
</dbReference>
<dbReference type="RefSeq" id="NP_311388.1">
    <property type="nucleotide sequence ID" value="NC_002695.1"/>
</dbReference>
<dbReference type="RefSeq" id="WP_001301832.1">
    <property type="nucleotide sequence ID" value="NZ_VOAI01000001.1"/>
</dbReference>
<dbReference type="SMR" id="Q8XAC5"/>
<dbReference type="STRING" id="155864.Z3762"/>
<dbReference type="GeneID" id="915220"/>
<dbReference type="KEGG" id="ece:Z3762"/>
<dbReference type="KEGG" id="ecs:ECs_3361"/>
<dbReference type="PATRIC" id="fig|386585.9.peg.3511"/>
<dbReference type="eggNOG" id="COG0150">
    <property type="taxonomic scope" value="Bacteria"/>
</dbReference>
<dbReference type="HOGENOM" id="CLU_047116_0_0_6"/>
<dbReference type="OMA" id="MTDYICV"/>
<dbReference type="UniPathway" id="UPA00074">
    <property type="reaction ID" value="UER00129"/>
</dbReference>
<dbReference type="Proteomes" id="UP000000558">
    <property type="component" value="Chromosome"/>
</dbReference>
<dbReference type="Proteomes" id="UP000002519">
    <property type="component" value="Chromosome"/>
</dbReference>
<dbReference type="GO" id="GO:0005829">
    <property type="term" value="C:cytosol"/>
    <property type="evidence" value="ECO:0007669"/>
    <property type="project" value="TreeGrafter"/>
</dbReference>
<dbReference type="GO" id="GO:0005524">
    <property type="term" value="F:ATP binding"/>
    <property type="evidence" value="ECO:0007669"/>
    <property type="project" value="UniProtKB-KW"/>
</dbReference>
<dbReference type="GO" id="GO:0004637">
    <property type="term" value="F:phosphoribosylamine-glycine ligase activity"/>
    <property type="evidence" value="ECO:0007669"/>
    <property type="project" value="TreeGrafter"/>
</dbReference>
<dbReference type="GO" id="GO:0004641">
    <property type="term" value="F:phosphoribosylformylglycinamidine cyclo-ligase activity"/>
    <property type="evidence" value="ECO:0007669"/>
    <property type="project" value="UniProtKB-UniRule"/>
</dbReference>
<dbReference type="GO" id="GO:0006189">
    <property type="term" value="P:'de novo' IMP biosynthetic process"/>
    <property type="evidence" value="ECO:0007669"/>
    <property type="project" value="UniProtKB-UniRule"/>
</dbReference>
<dbReference type="GO" id="GO:0046084">
    <property type="term" value="P:adenine biosynthetic process"/>
    <property type="evidence" value="ECO:0007669"/>
    <property type="project" value="TreeGrafter"/>
</dbReference>
<dbReference type="CDD" id="cd02196">
    <property type="entry name" value="PurM"/>
    <property type="match status" value="1"/>
</dbReference>
<dbReference type="FunFam" id="3.30.1330.10:FF:000001">
    <property type="entry name" value="Phosphoribosylformylglycinamidine cyclo-ligase"/>
    <property type="match status" value="1"/>
</dbReference>
<dbReference type="FunFam" id="3.90.650.10:FF:000001">
    <property type="entry name" value="Phosphoribosylformylglycinamidine cyclo-ligase"/>
    <property type="match status" value="1"/>
</dbReference>
<dbReference type="Gene3D" id="3.90.650.10">
    <property type="entry name" value="PurM-like C-terminal domain"/>
    <property type="match status" value="1"/>
</dbReference>
<dbReference type="Gene3D" id="3.30.1330.10">
    <property type="entry name" value="PurM-like, N-terminal domain"/>
    <property type="match status" value="1"/>
</dbReference>
<dbReference type="HAMAP" id="MF_00741">
    <property type="entry name" value="AIRS"/>
    <property type="match status" value="1"/>
</dbReference>
<dbReference type="InterPro" id="IPR010918">
    <property type="entry name" value="PurM-like_C_dom"/>
</dbReference>
<dbReference type="InterPro" id="IPR036676">
    <property type="entry name" value="PurM-like_C_sf"/>
</dbReference>
<dbReference type="InterPro" id="IPR016188">
    <property type="entry name" value="PurM-like_N"/>
</dbReference>
<dbReference type="InterPro" id="IPR036921">
    <property type="entry name" value="PurM-like_N_sf"/>
</dbReference>
<dbReference type="InterPro" id="IPR004733">
    <property type="entry name" value="PurM_cligase"/>
</dbReference>
<dbReference type="NCBIfam" id="TIGR00878">
    <property type="entry name" value="purM"/>
    <property type="match status" value="1"/>
</dbReference>
<dbReference type="PANTHER" id="PTHR10520:SF12">
    <property type="entry name" value="TRIFUNCTIONAL PURINE BIOSYNTHETIC PROTEIN ADENOSINE-3"/>
    <property type="match status" value="1"/>
</dbReference>
<dbReference type="PANTHER" id="PTHR10520">
    <property type="entry name" value="TRIFUNCTIONAL PURINE BIOSYNTHETIC PROTEIN ADENOSINE-3-RELATED"/>
    <property type="match status" value="1"/>
</dbReference>
<dbReference type="Pfam" id="PF00586">
    <property type="entry name" value="AIRS"/>
    <property type="match status" value="1"/>
</dbReference>
<dbReference type="Pfam" id="PF02769">
    <property type="entry name" value="AIRS_C"/>
    <property type="match status" value="1"/>
</dbReference>
<dbReference type="SUPFAM" id="SSF56042">
    <property type="entry name" value="PurM C-terminal domain-like"/>
    <property type="match status" value="1"/>
</dbReference>
<dbReference type="SUPFAM" id="SSF55326">
    <property type="entry name" value="PurM N-terminal domain-like"/>
    <property type="match status" value="1"/>
</dbReference>
<keyword id="KW-0067">ATP-binding</keyword>
<keyword id="KW-0963">Cytoplasm</keyword>
<keyword id="KW-0436">Ligase</keyword>
<keyword id="KW-0547">Nucleotide-binding</keyword>
<keyword id="KW-0658">Purine biosynthesis</keyword>
<keyword id="KW-1185">Reference proteome</keyword>
<proteinExistence type="inferred from homology"/>
<protein>
    <recommendedName>
        <fullName evidence="2">Phosphoribosylformylglycinamidine cyclo-ligase</fullName>
        <ecNumber evidence="2">6.3.3.1</ecNumber>
    </recommendedName>
    <alternativeName>
        <fullName evidence="2">AIR synthase</fullName>
    </alternativeName>
    <alternativeName>
        <fullName evidence="2">AIRS</fullName>
    </alternativeName>
    <alternativeName>
        <fullName evidence="2">Phosphoribosyl-aminoimidazole synthetase</fullName>
    </alternativeName>
</protein>
<organism>
    <name type="scientific">Escherichia coli O157:H7</name>
    <dbReference type="NCBI Taxonomy" id="83334"/>
    <lineage>
        <taxon>Bacteria</taxon>
        <taxon>Pseudomonadati</taxon>
        <taxon>Pseudomonadota</taxon>
        <taxon>Gammaproteobacteria</taxon>
        <taxon>Enterobacterales</taxon>
        <taxon>Enterobacteriaceae</taxon>
        <taxon>Escherichia</taxon>
    </lineage>
</organism>
<sequence length="345" mass="36850">MTDKTSLSYKDAGVDIDAGNALVGRIKGVVKKTRRPEVMGGLGGFGALCALPQKYREPVLVSGTDGVGTKLRLAMDLKRHDTIGIDLVAMCVNDLVVQGAEPLFFLDYYATGKLDVDTASAVISGIAEGCLQSGCSLVGGETAEMPGMYHGEDYDVAGFCVGVVEKSEIIDGSKVSDGDVLIALGSSGPHSNGYSLVRKILEVSGCDPQTTELDGKPLADHLLAPTRIYVKSVLELIEKVDVNAIAHLTGGGFWENIPRVLPDNTQAVIDESSWQWPEVFNWLQTAGNVERHEMYRTFNCGVGMIIALPAPEVDKALALLNANGENAWKIGIIKASDSEQRVVIE</sequence>